<sequence>MTILNHTLGFPRVGLKRELKKAQESYWAGNSTQEELLNVGRELRARHWQQQQQAGVDLVPVGDFAWYDHVLTTSLLLGNVPERHQNADGSIDIDTLFRIGRGRAPTGKPAAAAEMTKWFNTNYHYMVPEFQQGQQFKLGWTQLLDEVDEALALGHKIKPVLLGPITYLWLGKVKGEQFDRLSLLNDILPVYQQVLAELAKRGIEWVQIDEPALVLELPQEWLDAYQPAYQALQGQVKLLLTTYFDSIGHNIDTIRALPVQGLHVDVVAGHDDLAVLHKNLPKEWLLSLGVINGRNVWRADLSSWFERLQPLVNSRPLWLGSSCSLLHSPIDLNEETRLDAEVKSWFAFALQKCAELALLTQALNAPNDAKLAELAAYSAPIRARRSSSRVHNAQVEQRLAAITSQDIERQLPYEARAETQRKRFNLPAWPTTTIGSFPQTTEIRGLRLDFKQGRLDGKNYRTGISEHIKQAIAEQERLGLDVLVHGEAERNDMVEYFGEHLDGFVFTQNGWVQSYGSRCVKPPVIIGDISRPEAITVEWAKYAQSLTEKPVKGMLTGPVTILCWSFPREDVSRETIAKQIALALRDEVEDLEKAGIGIIQIDEPALREGLPLRRADWQAYLQWAVDAFKLNAAVAQNDTQIHTHMCYCEFNDIMDSIAALDADVITIETSRSDMELLESFEDFAYPNEIGPGVYDIHSPNVPSVEWIEALLRKAAQRIPAERLWVNPDCGLKTRGWPETRQALANMVLAAQRLREEQI</sequence>
<reference key="1">
    <citation type="journal article" date="2007" name="PLoS Genet.">
        <title>The complete genome sequence of Yersinia pseudotuberculosis IP31758, the causative agent of Far East scarlet-like fever.</title>
        <authorList>
            <person name="Eppinger M."/>
            <person name="Rosovitz M.J."/>
            <person name="Fricke W.F."/>
            <person name="Rasko D.A."/>
            <person name="Kokorina G."/>
            <person name="Fayolle C."/>
            <person name="Lindler L.E."/>
            <person name="Carniel E."/>
            <person name="Ravel J."/>
        </authorList>
    </citation>
    <scope>NUCLEOTIDE SEQUENCE [LARGE SCALE GENOMIC DNA]</scope>
    <source>
        <strain>IP 31758</strain>
    </source>
</reference>
<protein>
    <recommendedName>
        <fullName evidence="1">5-methyltetrahydropteroyltriglutamate--homocysteine methyltransferase</fullName>
        <ecNumber evidence="1">2.1.1.14</ecNumber>
    </recommendedName>
    <alternativeName>
        <fullName evidence="1">Cobalamin-independent methionine synthase</fullName>
    </alternativeName>
    <alternativeName>
        <fullName evidence="1">Methionine synthase, vitamin-B12 independent isozyme</fullName>
    </alternativeName>
</protein>
<feature type="chain" id="PRO_1000058317" description="5-methyltetrahydropteroyltriglutamate--homocysteine methyltransferase">
    <location>
        <begin position="1"/>
        <end position="758"/>
    </location>
</feature>
<feature type="active site" description="Proton donor" evidence="1">
    <location>
        <position position="697"/>
    </location>
</feature>
<feature type="binding site" evidence="1">
    <location>
        <begin position="17"/>
        <end position="20"/>
    </location>
    <ligand>
        <name>5-methyltetrahydropteroyltri-L-glutamate</name>
        <dbReference type="ChEBI" id="CHEBI:58207"/>
    </ligand>
</feature>
<feature type="binding site" evidence="1">
    <location>
        <position position="117"/>
    </location>
    <ligand>
        <name>5-methyltetrahydropteroyltri-L-glutamate</name>
        <dbReference type="ChEBI" id="CHEBI:58207"/>
    </ligand>
</feature>
<feature type="binding site" evidence="1">
    <location>
        <begin position="434"/>
        <end position="436"/>
    </location>
    <ligand>
        <name>L-homocysteine</name>
        <dbReference type="ChEBI" id="CHEBI:58199"/>
    </ligand>
</feature>
<feature type="binding site" evidence="1">
    <location>
        <begin position="434"/>
        <end position="436"/>
    </location>
    <ligand>
        <name>L-methionine</name>
        <dbReference type="ChEBI" id="CHEBI:57844"/>
    </ligand>
</feature>
<feature type="binding site" evidence="1">
    <location>
        <position position="487"/>
    </location>
    <ligand>
        <name>L-homocysteine</name>
        <dbReference type="ChEBI" id="CHEBI:58199"/>
    </ligand>
</feature>
<feature type="binding site" evidence="1">
    <location>
        <position position="487"/>
    </location>
    <ligand>
        <name>L-methionine</name>
        <dbReference type="ChEBI" id="CHEBI:57844"/>
    </ligand>
</feature>
<feature type="binding site" evidence="1">
    <location>
        <begin position="518"/>
        <end position="519"/>
    </location>
    <ligand>
        <name>5-methyltetrahydropteroyltri-L-glutamate</name>
        <dbReference type="ChEBI" id="CHEBI:58207"/>
    </ligand>
</feature>
<feature type="binding site" evidence="1">
    <location>
        <position position="564"/>
    </location>
    <ligand>
        <name>5-methyltetrahydropteroyltri-L-glutamate</name>
        <dbReference type="ChEBI" id="CHEBI:58207"/>
    </ligand>
</feature>
<feature type="binding site" evidence="1">
    <location>
        <position position="602"/>
    </location>
    <ligand>
        <name>L-homocysteine</name>
        <dbReference type="ChEBI" id="CHEBI:58199"/>
    </ligand>
</feature>
<feature type="binding site" evidence="1">
    <location>
        <position position="602"/>
    </location>
    <ligand>
        <name>L-methionine</name>
        <dbReference type="ChEBI" id="CHEBI:57844"/>
    </ligand>
</feature>
<feature type="binding site" evidence="1">
    <location>
        <position position="608"/>
    </location>
    <ligand>
        <name>5-methyltetrahydropteroyltri-L-glutamate</name>
        <dbReference type="ChEBI" id="CHEBI:58207"/>
    </ligand>
</feature>
<feature type="binding site" evidence="1">
    <location>
        <position position="644"/>
    </location>
    <ligand>
        <name>Zn(2+)</name>
        <dbReference type="ChEBI" id="CHEBI:29105"/>
        <note>catalytic</note>
    </ligand>
</feature>
<feature type="binding site" evidence="1">
    <location>
        <position position="646"/>
    </location>
    <ligand>
        <name>Zn(2+)</name>
        <dbReference type="ChEBI" id="CHEBI:29105"/>
        <note>catalytic</note>
    </ligand>
</feature>
<feature type="binding site" evidence="1">
    <location>
        <position position="668"/>
    </location>
    <ligand>
        <name>Zn(2+)</name>
        <dbReference type="ChEBI" id="CHEBI:29105"/>
        <note>catalytic</note>
    </ligand>
</feature>
<feature type="binding site" evidence="1">
    <location>
        <position position="729"/>
    </location>
    <ligand>
        <name>Zn(2+)</name>
        <dbReference type="ChEBI" id="CHEBI:29105"/>
        <note>catalytic</note>
    </ligand>
</feature>
<evidence type="ECO:0000255" key="1">
    <source>
        <dbReference type="HAMAP-Rule" id="MF_00172"/>
    </source>
</evidence>
<proteinExistence type="inferred from homology"/>
<gene>
    <name evidence="1" type="primary">metE</name>
    <name type="ordered locus">YpsIP31758_0264</name>
</gene>
<accession>A7FDD3</accession>
<dbReference type="EC" id="2.1.1.14" evidence="1"/>
<dbReference type="EMBL" id="CP000720">
    <property type="protein sequence ID" value="ABS46165.1"/>
    <property type="molecule type" value="Genomic_DNA"/>
</dbReference>
<dbReference type="RefSeq" id="WP_012104339.1">
    <property type="nucleotide sequence ID" value="NC_009708.1"/>
</dbReference>
<dbReference type="SMR" id="A7FDD3"/>
<dbReference type="KEGG" id="ypi:YpsIP31758_0264"/>
<dbReference type="HOGENOM" id="CLU_013175_0_0_6"/>
<dbReference type="UniPathway" id="UPA00051">
    <property type="reaction ID" value="UER00082"/>
</dbReference>
<dbReference type="Proteomes" id="UP000002412">
    <property type="component" value="Chromosome"/>
</dbReference>
<dbReference type="GO" id="GO:0003871">
    <property type="term" value="F:5-methyltetrahydropteroyltriglutamate-homocysteine S-methyltransferase activity"/>
    <property type="evidence" value="ECO:0007669"/>
    <property type="project" value="UniProtKB-UniRule"/>
</dbReference>
<dbReference type="GO" id="GO:0008270">
    <property type="term" value="F:zinc ion binding"/>
    <property type="evidence" value="ECO:0007669"/>
    <property type="project" value="InterPro"/>
</dbReference>
<dbReference type="GO" id="GO:0009086">
    <property type="term" value="P:methionine biosynthetic process"/>
    <property type="evidence" value="ECO:0007669"/>
    <property type="project" value="UniProtKB-UniRule"/>
</dbReference>
<dbReference type="GO" id="GO:0032259">
    <property type="term" value="P:methylation"/>
    <property type="evidence" value="ECO:0007669"/>
    <property type="project" value="UniProtKB-KW"/>
</dbReference>
<dbReference type="CDD" id="cd03311">
    <property type="entry name" value="CIMS_C_terminal_like"/>
    <property type="match status" value="1"/>
</dbReference>
<dbReference type="CDD" id="cd03312">
    <property type="entry name" value="CIMS_N_terminal_like"/>
    <property type="match status" value="1"/>
</dbReference>
<dbReference type="FunFam" id="3.20.20.210:FF:000002">
    <property type="entry name" value="5-methyltetrahydropteroyltriglutamate--homocysteine methyltransferase"/>
    <property type="match status" value="1"/>
</dbReference>
<dbReference type="FunFam" id="3.20.20.210:FF:000003">
    <property type="entry name" value="5-methyltetrahydropteroyltriglutamate--homocysteine methyltransferase"/>
    <property type="match status" value="1"/>
</dbReference>
<dbReference type="Gene3D" id="3.20.20.210">
    <property type="match status" value="2"/>
</dbReference>
<dbReference type="HAMAP" id="MF_00172">
    <property type="entry name" value="Meth_synth"/>
    <property type="match status" value="1"/>
</dbReference>
<dbReference type="InterPro" id="IPR013215">
    <property type="entry name" value="Cbl-indep_Met_Synth_N"/>
</dbReference>
<dbReference type="InterPro" id="IPR006276">
    <property type="entry name" value="Cobalamin-indep_Met_synthase"/>
</dbReference>
<dbReference type="InterPro" id="IPR002629">
    <property type="entry name" value="Met_Synth_C/arc"/>
</dbReference>
<dbReference type="InterPro" id="IPR038071">
    <property type="entry name" value="UROD/MetE-like_sf"/>
</dbReference>
<dbReference type="NCBIfam" id="TIGR01371">
    <property type="entry name" value="met_syn_B12ind"/>
    <property type="match status" value="1"/>
</dbReference>
<dbReference type="NCBIfam" id="NF003556">
    <property type="entry name" value="PRK05222.1"/>
    <property type="match status" value="1"/>
</dbReference>
<dbReference type="PANTHER" id="PTHR30519">
    <property type="entry name" value="5-METHYLTETRAHYDROPTEROYLTRIGLUTAMATE--HOMOCYSTEINE METHYLTRANSFERASE"/>
    <property type="match status" value="1"/>
</dbReference>
<dbReference type="Pfam" id="PF08267">
    <property type="entry name" value="Meth_synt_1"/>
    <property type="match status" value="1"/>
</dbReference>
<dbReference type="Pfam" id="PF01717">
    <property type="entry name" value="Meth_synt_2"/>
    <property type="match status" value="1"/>
</dbReference>
<dbReference type="PIRSF" id="PIRSF000382">
    <property type="entry name" value="MeTrfase_B12_ind"/>
    <property type="match status" value="1"/>
</dbReference>
<dbReference type="SUPFAM" id="SSF51726">
    <property type="entry name" value="UROD/MetE-like"/>
    <property type="match status" value="2"/>
</dbReference>
<keyword id="KW-0028">Amino-acid biosynthesis</keyword>
<keyword id="KW-0479">Metal-binding</keyword>
<keyword id="KW-0486">Methionine biosynthesis</keyword>
<keyword id="KW-0489">Methyltransferase</keyword>
<keyword id="KW-0677">Repeat</keyword>
<keyword id="KW-0808">Transferase</keyword>
<keyword id="KW-0862">Zinc</keyword>
<name>METE_YERP3</name>
<comment type="function">
    <text evidence="1">Catalyzes the transfer of a methyl group from 5-methyltetrahydrofolate to homocysteine resulting in methionine formation.</text>
</comment>
<comment type="catalytic activity">
    <reaction evidence="1">
        <text>5-methyltetrahydropteroyltri-L-glutamate + L-homocysteine = tetrahydropteroyltri-L-glutamate + L-methionine</text>
        <dbReference type="Rhea" id="RHEA:21196"/>
        <dbReference type="ChEBI" id="CHEBI:57844"/>
        <dbReference type="ChEBI" id="CHEBI:58140"/>
        <dbReference type="ChEBI" id="CHEBI:58199"/>
        <dbReference type="ChEBI" id="CHEBI:58207"/>
        <dbReference type="EC" id="2.1.1.14"/>
    </reaction>
</comment>
<comment type="cofactor">
    <cofactor evidence="1">
        <name>Zn(2+)</name>
        <dbReference type="ChEBI" id="CHEBI:29105"/>
    </cofactor>
    <text evidence="1">Binds 1 zinc ion per subunit.</text>
</comment>
<comment type="pathway">
    <text evidence="1">Amino-acid biosynthesis; L-methionine biosynthesis via de novo pathway; L-methionine from L-homocysteine (MetE route): step 1/1.</text>
</comment>
<comment type="similarity">
    <text evidence="1">Belongs to the vitamin-B12 independent methionine synthase family.</text>
</comment>
<organism>
    <name type="scientific">Yersinia pseudotuberculosis serotype O:1b (strain IP 31758)</name>
    <dbReference type="NCBI Taxonomy" id="349747"/>
    <lineage>
        <taxon>Bacteria</taxon>
        <taxon>Pseudomonadati</taxon>
        <taxon>Pseudomonadota</taxon>
        <taxon>Gammaproteobacteria</taxon>
        <taxon>Enterobacterales</taxon>
        <taxon>Yersiniaceae</taxon>
        <taxon>Yersinia</taxon>
    </lineage>
</organism>